<organism evidence="7">
    <name type="scientific">Bacillus anthracis</name>
    <dbReference type="NCBI Taxonomy" id="1392"/>
    <lineage>
        <taxon>Bacteria</taxon>
        <taxon>Bacillati</taxon>
        <taxon>Bacillota</taxon>
        <taxon>Bacilli</taxon>
        <taxon>Bacillales</taxon>
        <taxon>Bacillaceae</taxon>
        <taxon>Bacillus</taxon>
        <taxon>Bacillus cereus group</taxon>
    </lineage>
</organism>
<reference evidence="7" key="1">
    <citation type="journal article" date="2009" name="J. Bacteriol.">
        <title>The complete genome sequence of Bacillus anthracis Ames 'Ancestor'.</title>
        <authorList>
            <person name="Ravel J."/>
            <person name="Jiang L."/>
            <person name="Stanley S.T."/>
            <person name="Wilson M.R."/>
            <person name="Decker R.S."/>
            <person name="Read T.D."/>
            <person name="Worsham P."/>
            <person name="Keim P.S."/>
            <person name="Salzberg S.L."/>
            <person name="Fraser-Liggett C.M."/>
            <person name="Rasko D.A."/>
        </authorList>
    </citation>
    <scope>NUCLEOTIDE SEQUENCE [LARGE SCALE GENOMIC DNA]</scope>
    <source>
        <strain evidence="7">Ames ancestor</strain>
    </source>
</reference>
<reference evidence="5" key="2">
    <citation type="journal article" date="2013" name="DNA Repair">
        <title>Evidence that YycJ is a novel 5'-3' double-stranded DNA exonuclease acting in Bacillus anthracis mismatch repair.</title>
        <authorList>
            <person name="Yang H."/>
            <person name="Yung M."/>
            <person name="Li L."/>
            <person name="Hoch J.A."/>
            <person name="Ryan C.M."/>
            <person name="Kar U.K."/>
            <person name="Souda P."/>
            <person name="Whitelegge J.P."/>
            <person name="Miller J.H."/>
        </authorList>
    </citation>
    <scope>FUNCTION</scope>
    <scope>COFACTOR</scope>
    <scope>DISRUPTION PHENOTYPE</scope>
    <scope>MUTAGENESIS OF GLY-11; GLY-14; ASN-15; ASP-29; GLY-31; THR-57; HIS-58; HIS-60; ASP-62; HIS-63; HIS-123; ASP-124; THR-144; ASP-145; GLY-147; GLU-166; ASN-168; HIS-169; GLY-192; HIS-193; ASN-196; HIS-218 AND ASN-224</scope>
</reference>
<comment type="function">
    <text evidence="1 3">5'-&gt;3' double-stranded DNA exonuclease (PubMed:23491602). May play a role in mutation mismatch repair (MMR) (PubMed:23491602). Required for accurate coordination of cell division with DNA replication (By similarity). May play a role in cell wall metabolism (By similarity).</text>
</comment>
<comment type="cofactor">
    <cofactor evidence="2">
        <name>Fe(2+)</name>
        <dbReference type="ChEBI" id="CHEBI:29033"/>
    </cofactor>
    <cofactor evidence="2">
        <name>Zn(2+)</name>
        <dbReference type="ChEBI" id="CHEBI:29105"/>
    </cofactor>
    <cofactor evidence="3">
        <name>Mn(2+)</name>
        <dbReference type="ChEBI" id="CHEBI:29035"/>
    </cofactor>
    <text evidence="2">Binds 2 metal ions per subunit. The endogenous metal is unknown.</text>
</comment>
<comment type="disruption phenotype">
    <text evidence="3">Significantly increases mutation frequency; this frequency is increased further in a mutS mutant background.</text>
</comment>
<comment type="similarity">
    <text evidence="5">Belongs to the metallo-beta-lactamase superfamily.</text>
</comment>
<gene>
    <name evidence="4" type="primary">yycJ</name>
    <name evidence="6" type="ordered locus">GBAA_5711</name>
</gene>
<proteinExistence type="evidence at protein level"/>
<name>YYCJ_BACAN</name>
<dbReference type="EC" id="3.1.11.-" evidence="3"/>
<dbReference type="EMBL" id="AE017334">
    <property type="protein sequence ID" value="AAT34872.1"/>
    <property type="molecule type" value="Genomic_DNA"/>
</dbReference>
<dbReference type="RefSeq" id="WP_000522833.1">
    <property type="nucleotide sequence ID" value="NZ_WXXJ01000017.1"/>
</dbReference>
<dbReference type="SMR" id="A0A4Y1WBN6"/>
<dbReference type="GeneID" id="45025286"/>
<dbReference type="KEGG" id="bar:GBAA_5711"/>
<dbReference type="PATRIC" id="fig|1392.230.peg.5617"/>
<dbReference type="eggNOG" id="COG1235">
    <property type="taxonomic scope" value="Bacteria"/>
</dbReference>
<dbReference type="OMA" id="LVLECNH"/>
<dbReference type="OrthoDB" id="9781189at2"/>
<dbReference type="Proteomes" id="UP000000594">
    <property type="component" value="Chromosome"/>
</dbReference>
<dbReference type="GO" id="GO:0004527">
    <property type="term" value="F:exonuclease activity"/>
    <property type="evidence" value="ECO:0007669"/>
    <property type="project" value="UniProtKB-KW"/>
</dbReference>
<dbReference type="GO" id="GO:0046872">
    <property type="term" value="F:metal ion binding"/>
    <property type="evidence" value="ECO:0007669"/>
    <property type="project" value="UniProtKB-KW"/>
</dbReference>
<dbReference type="CDD" id="cd07733">
    <property type="entry name" value="YycJ-like_MBL-fold"/>
    <property type="match status" value="1"/>
</dbReference>
<dbReference type="Gene3D" id="3.60.15.10">
    <property type="entry name" value="Ribonuclease Z/Hydroxyacylglutathione hydrolase-like"/>
    <property type="match status" value="1"/>
</dbReference>
<dbReference type="InterPro" id="IPR001279">
    <property type="entry name" value="Metallo-B-lactamas"/>
</dbReference>
<dbReference type="InterPro" id="IPR036866">
    <property type="entry name" value="RibonucZ/Hydroxyglut_hydro"/>
</dbReference>
<dbReference type="InterPro" id="IPR052533">
    <property type="entry name" value="WalJ_YycJ_ExoDNase_sf"/>
</dbReference>
<dbReference type="PANTHER" id="PTHR47619:SF1">
    <property type="entry name" value="EXODEOXYRIBONUCLEASE WALJ"/>
    <property type="match status" value="1"/>
</dbReference>
<dbReference type="PANTHER" id="PTHR47619">
    <property type="entry name" value="METALLO-HYDROLASE YYCJ-RELATED"/>
    <property type="match status" value="1"/>
</dbReference>
<dbReference type="Pfam" id="PF12706">
    <property type="entry name" value="Lactamase_B_2"/>
    <property type="match status" value="1"/>
</dbReference>
<dbReference type="SMART" id="SM00849">
    <property type="entry name" value="Lactamase_B"/>
    <property type="match status" value="1"/>
</dbReference>
<dbReference type="SUPFAM" id="SSF56281">
    <property type="entry name" value="Metallo-hydrolase/oxidoreductase"/>
    <property type="match status" value="1"/>
</dbReference>
<feature type="chain" id="PRO_0000459010" description="Exodeoxyribonuclease YycJ">
    <location>
        <begin position="1"/>
        <end position="264"/>
    </location>
</feature>
<feature type="binding site" evidence="2">
    <location>
        <position position="58"/>
    </location>
    <ligand>
        <name>a divalent metal cation</name>
        <dbReference type="ChEBI" id="CHEBI:60240"/>
        <label>1</label>
    </ligand>
</feature>
<feature type="binding site" evidence="2">
    <location>
        <position position="60"/>
    </location>
    <ligand>
        <name>a divalent metal cation</name>
        <dbReference type="ChEBI" id="CHEBI:60240"/>
        <label>1</label>
    </ligand>
</feature>
<feature type="binding site" evidence="2">
    <location>
        <position position="62"/>
    </location>
    <ligand>
        <name>a divalent metal cation</name>
        <dbReference type="ChEBI" id="CHEBI:60240"/>
        <label>2</label>
    </ligand>
</feature>
<feature type="binding site" evidence="2">
    <location>
        <position position="63"/>
    </location>
    <ligand>
        <name>a divalent metal cation</name>
        <dbReference type="ChEBI" id="CHEBI:60240"/>
        <label>2</label>
    </ligand>
</feature>
<feature type="binding site" evidence="2">
    <location>
        <position position="145"/>
    </location>
    <ligand>
        <name>a divalent metal cation</name>
        <dbReference type="ChEBI" id="CHEBI:60240"/>
        <label>2</label>
    </ligand>
</feature>
<feature type="mutagenesis site" description="Moderately increases mutation frequency." evidence="3">
    <original>G</original>
    <variation>T</variation>
    <location>
        <position position="11"/>
    </location>
</feature>
<feature type="mutagenesis site" description="Moderately increases mutation frequency." evidence="3">
    <original>G</original>
    <variation>T</variation>
    <location>
        <position position="14"/>
    </location>
</feature>
<feature type="mutagenesis site" description="Moderately increases mutation frequency." evidence="3">
    <original>N</original>
    <variation>A</variation>
    <location>
        <position position="15"/>
    </location>
</feature>
<feature type="mutagenesis site" description="Significantly increases mutation frequency." evidence="3">
    <original>D</original>
    <variation>N</variation>
    <location>
        <position position="29"/>
    </location>
</feature>
<feature type="mutagenesis site" description="Significantly increases mutation frequency." evidence="3">
    <original>G</original>
    <variation>T</variation>
    <location>
        <position position="31"/>
    </location>
</feature>
<feature type="mutagenesis site" description="Significantly increases mutation frequency." evidence="3">
    <original>T</original>
    <variation>A</variation>
    <location>
        <position position="57"/>
    </location>
</feature>
<feature type="mutagenesis site" description="Significantly increases mutation frequency." evidence="3">
    <original>H</original>
    <variation>A</variation>
    <location>
        <position position="58"/>
    </location>
</feature>
<feature type="mutagenesis site" description="Moderately increases mutation frequency." evidence="3">
    <original>H</original>
    <variation>A</variation>
    <location>
        <position position="60"/>
    </location>
</feature>
<feature type="mutagenesis site" description="Significantly increases mutation frequency." evidence="3">
    <original>D</original>
    <variation>N</variation>
    <location>
        <position position="62"/>
    </location>
</feature>
<feature type="mutagenesis site" description="Moderately increases mutation frequency." evidence="3">
    <original>H</original>
    <variation>A</variation>
    <location>
        <position position="63"/>
    </location>
</feature>
<feature type="mutagenesis site" description="Significantly increases mutation frequency. Abolishes nuclease activity toward nicked-circular dsDNA." evidence="3">
    <original>H</original>
    <variation>A</variation>
    <location>
        <position position="123"/>
    </location>
</feature>
<feature type="mutagenesis site" description="Moderately increases mutation frequency." evidence="3">
    <original>D</original>
    <variation>N</variation>
    <location>
        <position position="124"/>
    </location>
</feature>
<feature type="mutagenesis site" description="Moderately increases mutation frequency." evidence="3">
    <original>T</original>
    <variation>A</variation>
    <location>
        <position position="144"/>
    </location>
</feature>
<feature type="mutagenesis site" description="Significantly increases mutation frequency." evidence="3">
    <original>D</original>
    <variation>N</variation>
    <location>
        <position position="145"/>
    </location>
</feature>
<feature type="mutagenesis site" description="Significantly increases mutation frequency." evidence="3">
    <original>G</original>
    <variation>T</variation>
    <location>
        <position position="147"/>
    </location>
</feature>
<feature type="mutagenesis site" description="Moderately increases mutation frequency." evidence="3">
    <original>E</original>
    <variation>A</variation>
    <location>
        <position position="166"/>
    </location>
</feature>
<feature type="mutagenesis site" description="Moderately increases mutation frequency." evidence="3">
    <original>N</original>
    <variation>D</variation>
    <location>
        <position position="168"/>
    </location>
</feature>
<feature type="mutagenesis site" description="Significantly increases mutation frequency." evidence="3">
    <original>H</original>
    <variation>A</variation>
    <location>
        <position position="169"/>
    </location>
</feature>
<feature type="mutagenesis site" description="Significantly increases mutation frequency." evidence="3">
    <original>G</original>
    <variation>T</variation>
    <location>
        <position position="192"/>
    </location>
</feature>
<feature type="mutagenesis site" description="Significantly increases mutation frequency." evidence="3">
    <original>H</original>
    <variation>A</variation>
    <location>
        <position position="193"/>
    </location>
</feature>
<feature type="mutagenesis site" description="Significantly increases mutation frequency." evidence="3">
    <original>N</original>
    <variation>A</variation>
    <location>
        <position position="196"/>
    </location>
</feature>
<feature type="mutagenesis site" description="Moderately increases mutation frequency." evidence="3">
    <original>H</original>
    <variation>A</variation>
    <location>
        <position position="218"/>
    </location>
</feature>
<feature type="mutagenesis site" description="Significantly increases mutation frequency." evidence="3">
    <original>N</original>
    <variation>A</variation>
    <location>
        <position position="224"/>
    </location>
</feature>
<evidence type="ECO:0000250" key="1">
    <source>
        <dbReference type="UniProtKB" id="C0SP91"/>
    </source>
</evidence>
<evidence type="ECO:0000250" key="2">
    <source>
        <dbReference type="UniProtKB" id="Q8ZRM2"/>
    </source>
</evidence>
<evidence type="ECO:0000269" key="3">
    <source>
    </source>
</evidence>
<evidence type="ECO:0000303" key="4">
    <source>
    </source>
</evidence>
<evidence type="ECO:0000305" key="5"/>
<evidence type="ECO:0000312" key="6">
    <source>
        <dbReference type="EMBL" id="AAT34872.1"/>
    </source>
</evidence>
<evidence type="ECO:0000312" key="7">
    <source>
        <dbReference type="Proteomes" id="UP000000594"/>
    </source>
</evidence>
<sequence length="264" mass="29293">MGLHFSVLASGSTGNMLYVGTDEKKLLVDAGLSGKATEALFKQAELNINDVSGILVTHEHSDHIKGLGVLARKYDLPVYANEKTWNAMEHLIGNIPTDQKFIFSVGDVKTFGDIEVESFGVSHDAAEPMFYAFHNNNRKLALITDTGYVSDRMKGVIKGANAFVFESNHDVEMLRMGRYPWSIKRRILSDVGHVCNEDAALAMADVITDETKHIYLAHLSLDNNMKELARMSVSQVLEEKGFGVGEAFEIHDTDPKMPTKIQYV</sequence>
<protein>
    <recommendedName>
        <fullName evidence="5">Exodeoxyribonuclease YycJ</fullName>
        <ecNumber evidence="3">3.1.11.-</ecNumber>
    </recommendedName>
</protein>
<accession>A0A4Y1WBN6</accession>
<accession>A0A1Q4LWL5</accession>
<accession>E9RCT8</accession>
<accession>E9RCT9</accession>
<accession>Q6HQ36</accession>
<accession>Q6KJI0</accession>
<accession>Q81JJ4</accession>
<keyword id="KW-0269">Exonuclease</keyword>
<keyword id="KW-0378">Hydrolase</keyword>
<keyword id="KW-0479">Metal-binding</keyword>
<keyword id="KW-0540">Nuclease</keyword>
<keyword id="KW-1185">Reference proteome</keyword>